<proteinExistence type="inferred from homology"/>
<evidence type="ECO:0000255" key="1">
    <source>
        <dbReference type="HAMAP-Rule" id="MF_00021"/>
    </source>
</evidence>
<protein>
    <recommendedName>
        <fullName evidence="1">tRNA sulfurtransferase</fullName>
        <ecNumber evidence="1">2.8.1.4</ecNumber>
    </recommendedName>
    <alternativeName>
        <fullName evidence="1">Sulfur carrier protein ThiS sulfurtransferase</fullName>
    </alternativeName>
    <alternativeName>
        <fullName evidence="1">Thiamine biosynthesis protein ThiI</fullName>
    </alternativeName>
    <alternativeName>
        <fullName evidence="1">tRNA 4-thiouridine synthase</fullName>
    </alternativeName>
</protein>
<reference key="1">
    <citation type="journal article" date="2009" name="PLoS Genet.">
        <title>Organised genome dynamics in the Escherichia coli species results in highly diverse adaptive paths.</title>
        <authorList>
            <person name="Touchon M."/>
            <person name="Hoede C."/>
            <person name="Tenaillon O."/>
            <person name="Barbe V."/>
            <person name="Baeriswyl S."/>
            <person name="Bidet P."/>
            <person name="Bingen E."/>
            <person name="Bonacorsi S."/>
            <person name="Bouchier C."/>
            <person name="Bouvet O."/>
            <person name="Calteau A."/>
            <person name="Chiapello H."/>
            <person name="Clermont O."/>
            <person name="Cruveiller S."/>
            <person name="Danchin A."/>
            <person name="Diard M."/>
            <person name="Dossat C."/>
            <person name="Karoui M.E."/>
            <person name="Frapy E."/>
            <person name="Garry L."/>
            <person name="Ghigo J.M."/>
            <person name="Gilles A.M."/>
            <person name="Johnson J."/>
            <person name="Le Bouguenec C."/>
            <person name="Lescat M."/>
            <person name="Mangenot S."/>
            <person name="Martinez-Jehanne V."/>
            <person name="Matic I."/>
            <person name="Nassif X."/>
            <person name="Oztas S."/>
            <person name="Petit M.A."/>
            <person name="Pichon C."/>
            <person name="Rouy Z."/>
            <person name="Ruf C.S."/>
            <person name="Schneider D."/>
            <person name="Tourret J."/>
            <person name="Vacherie B."/>
            <person name="Vallenet D."/>
            <person name="Medigue C."/>
            <person name="Rocha E.P.C."/>
            <person name="Denamur E."/>
        </authorList>
    </citation>
    <scope>NUCLEOTIDE SEQUENCE [LARGE SCALE GENOMIC DNA]</scope>
    <source>
        <strain>55989 / EAEC</strain>
    </source>
</reference>
<gene>
    <name evidence="1" type="primary">thiI</name>
    <name type="ordered locus">EC55989_0434</name>
</gene>
<accession>B7L657</accession>
<keyword id="KW-0067">ATP-binding</keyword>
<keyword id="KW-0963">Cytoplasm</keyword>
<keyword id="KW-1015">Disulfide bond</keyword>
<keyword id="KW-0547">Nucleotide-binding</keyword>
<keyword id="KW-0676">Redox-active center</keyword>
<keyword id="KW-1185">Reference proteome</keyword>
<keyword id="KW-0694">RNA-binding</keyword>
<keyword id="KW-0784">Thiamine biosynthesis</keyword>
<keyword id="KW-0808">Transferase</keyword>
<keyword id="KW-0820">tRNA-binding</keyword>
<feature type="chain" id="PRO_1000196924" description="tRNA sulfurtransferase">
    <location>
        <begin position="1"/>
        <end position="482"/>
    </location>
</feature>
<feature type="domain" description="THUMP" evidence="1">
    <location>
        <begin position="61"/>
        <end position="165"/>
    </location>
</feature>
<feature type="domain" description="Rhodanese" evidence="1">
    <location>
        <begin position="404"/>
        <end position="482"/>
    </location>
</feature>
<feature type="active site" description="Cysteine persulfide intermediate" evidence="1">
    <location>
        <position position="456"/>
    </location>
</feature>
<feature type="binding site" evidence="1">
    <location>
        <begin position="183"/>
        <end position="184"/>
    </location>
    <ligand>
        <name>ATP</name>
        <dbReference type="ChEBI" id="CHEBI:30616"/>
    </ligand>
</feature>
<feature type="binding site" evidence="1">
    <location>
        <position position="265"/>
    </location>
    <ligand>
        <name>ATP</name>
        <dbReference type="ChEBI" id="CHEBI:30616"/>
    </ligand>
</feature>
<feature type="binding site" evidence="1">
    <location>
        <position position="287"/>
    </location>
    <ligand>
        <name>ATP</name>
        <dbReference type="ChEBI" id="CHEBI:30616"/>
    </ligand>
</feature>
<feature type="binding site" evidence="1">
    <location>
        <position position="296"/>
    </location>
    <ligand>
        <name>ATP</name>
        <dbReference type="ChEBI" id="CHEBI:30616"/>
    </ligand>
</feature>
<feature type="disulfide bond" description="Redox-active" evidence="1">
    <location>
        <begin position="344"/>
        <end position="456"/>
    </location>
</feature>
<name>THII_ECO55</name>
<comment type="function">
    <text evidence="1">Catalyzes the ATP-dependent transfer of a sulfur to tRNA to produce 4-thiouridine in position 8 of tRNAs, which functions as a near-UV photosensor. Also catalyzes the transfer of sulfur to the sulfur carrier protein ThiS, forming ThiS-thiocarboxylate. This is a step in the synthesis of thiazole, in the thiamine biosynthesis pathway. The sulfur is donated as persulfide by IscS.</text>
</comment>
<comment type="catalytic activity">
    <reaction evidence="1">
        <text>[ThiI sulfur-carrier protein]-S-sulfanyl-L-cysteine + a uridine in tRNA + 2 reduced [2Fe-2S]-[ferredoxin] + ATP + H(+) = [ThiI sulfur-carrier protein]-L-cysteine + a 4-thiouridine in tRNA + 2 oxidized [2Fe-2S]-[ferredoxin] + AMP + diphosphate</text>
        <dbReference type="Rhea" id="RHEA:24176"/>
        <dbReference type="Rhea" id="RHEA-COMP:10000"/>
        <dbReference type="Rhea" id="RHEA-COMP:10001"/>
        <dbReference type="Rhea" id="RHEA-COMP:13337"/>
        <dbReference type="Rhea" id="RHEA-COMP:13338"/>
        <dbReference type="Rhea" id="RHEA-COMP:13339"/>
        <dbReference type="Rhea" id="RHEA-COMP:13340"/>
        <dbReference type="ChEBI" id="CHEBI:15378"/>
        <dbReference type="ChEBI" id="CHEBI:29950"/>
        <dbReference type="ChEBI" id="CHEBI:30616"/>
        <dbReference type="ChEBI" id="CHEBI:33019"/>
        <dbReference type="ChEBI" id="CHEBI:33737"/>
        <dbReference type="ChEBI" id="CHEBI:33738"/>
        <dbReference type="ChEBI" id="CHEBI:61963"/>
        <dbReference type="ChEBI" id="CHEBI:65315"/>
        <dbReference type="ChEBI" id="CHEBI:136798"/>
        <dbReference type="ChEBI" id="CHEBI:456215"/>
        <dbReference type="EC" id="2.8.1.4"/>
    </reaction>
</comment>
<comment type="catalytic activity">
    <reaction evidence="1">
        <text>[ThiS sulfur-carrier protein]-C-terminal Gly-Gly-AMP + S-sulfanyl-L-cysteinyl-[cysteine desulfurase] + AH2 = [ThiS sulfur-carrier protein]-C-terminal-Gly-aminoethanethioate + L-cysteinyl-[cysteine desulfurase] + A + AMP + 2 H(+)</text>
        <dbReference type="Rhea" id="RHEA:43340"/>
        <dbReference type="Rhea" id="RHEA-COMP:12157"/>
        <dbReference type="Rhea" id="RHEA-COMP:12158"/>
        <dbReference type="Rhea" id="RHEA-COMP:12910"/>
        <dbReference type="Rhea" id="RHEA-COMP:19908"/>
        <dbReference type="ChEBI" id="CHEBI:13193"/>
        <dbReference type="ChEBI" id="CHEBI:15378"/>
        <dbReference type="ChEBI" id="CHEBI:17499"/>
        <dbReference type="ChEBI" id="CHEBI:29950"/>
        <dbReference type="ChEBI" id="CHEBI:61963"/>
        <dbReference type="ChEBI" id="CHEBI:90618"/>
        <dbReference type="ChEBI" id="CHEBI:232372"/>
        <dbReference type="ChEBI" id="CHEBI:456215"/>
    </reaction>
</comment>
<comment type="pathway">
    <text evidence="1">Cofactor biosynthesis; thiamine diphosphate biosynthesis.</text>
</comment>
<comment type="subcellular location">
    <subcellularLocation>
        <location evidence="1">Cytoplasm</location>
    </subcellularLocation>
</comment>
<comment type="similarity">
    <text evidence="1">Belongs to the ThiI family.</text>
</comment>
<organism>
    <name type="scientific">Escherichia coli (strain 55989 / EAEC)</name>
    <dbReference type="NCBI Taxonomy" id="585055"/>
    <lineage>
        <taxon>Bacteria</taxon>
        <taxon>Pseudomonadati</taxon>
        <taxon>Pseudomonadota</taxon>
        <taxon>Gammaproteobacteria</taxon>
        <taxon>Enterobacterales</taxon>
        <taxon>Enterobacteriaceae</taxon>
        <taxon>Escherichia</taxon>
    </lineage>
</organism>
<dbReference type="EC" id="2.8.1.4" evidence="1"/>
<dbReference type="EMBL" id="CU928145">
    <property type="protein sequence ID" value="CAU96307.1"/>
    <property type="molecule type" value="Genomic_DNA"/>
</dbReference>
<dbReference type="RefSeq" id="WP_000668685.1">
    <property type="nucleotide sequence ID" value="NC_011748.1"/>
</dbReference>
<dbReference type="SMR" id="B7L657"/>
<dbReference type="KEGG" id="eck:EC55989_0434"/>
<dbReference type="HOGENOM" id="CLU_037952_4_1_6"/>
<dbReference type="UniPathway" id="UPA00060"/>
<dbReference type="Proteomes" id="UP000000746">
    <property type="component" value="Chromosome"/>
</dbReference>
<dbReference type="GO" id="GO:0005829">
    <property type="term" value="C:cytosol"/>
    <property type="evidence" value="ECO:0007669"/>
    <property type="project" value="TreeGrafter"/>
</dbReference>
<dbReference type="GO" id="GO:0005524">
    <property type="term" value="F:ATP binding"/>
    <property type="evidence" value="ECO:0007669"/>
    <property type="project" value="UniProtKB-UniRule"/>
</dbReference>
<dbReference type="GO" id="GO:0004810">
    <property type="term" value="F:CCA tRNA nucleotidyltransferase activity"/>
    <property type="evidence" value="ECO:0007669"/>
    <property type="project" value="InterPro"/>
</dbReference>
<dbReference type="GO" id="GO:0000049">
    <property type="term" value="F:tRNA binding"/>
    <property type="evidence" value="ECO:0007669"/>
    <property type="project" value="UniProtKB-UniRule"/>
</dbReference>
<dbReference type="GO" id="GO:0140741">
    <property type="term" value="F:tRNA-uracil-4 sulfurtransferase activity"/>
    <property type="evidence" value="ECO:0007669"/>
    <property type="project" value="UniProtKB-EC"/>
</dbReference>
<dbReference type="GO" id="GO:0009228">
    <property type="term" value="P:thiamine biosynthetic process"/>
    <property type="evidence" value="ECO:0007669"/>
    <property type="project" value="UniProtKB-KW"/>
</dbReference>
<dbReference type="GO" id="GO:0009229">
    <property type="term" value="P:thiamine diphosphate biosynthetic process"/>
    <property type="evidence" value="ECO:0007669"/>
    <property type="project" value="UniProtKB-UniRule"/>
</dbReference>
<dbReference type="GO" id="GO:0052837">
    <property type="term" value="P:thiazole biosynthetic process"/>
    <property type="evidence" value="ECO:0007669"/>
    <property type="project" value="InterPro"/>
</dbReference>
<dbReference type="GO" id="GO:0002937">
    <property type="term" value="P:tRNA 4-thiouridine biosynthesis"/>
    <property type="evidence" value="ECO:0007669"/>
    <property type="project" value="TreeGrafter"/>
</dbReference>
<dbReference type="CDD" id="cd01712">
    <property type="entry name" value="PPase_ThiI"/>
    <property type="match status" value="1"/>
</dbReference>
<dbReference type="CDD" id="cd00158">
    <property type="entry name" value="RHOD"/>
    <property type="match status" value="1"/>
</dbReference>
<dbReference type="CDD" id="cd11716">
    <property type="entry name" value="THUMP_ThiI"/>
    <property type="match status" value="1"/>
</dbReference>
<dbReference type="FunFam" id="3.30.2130.30:FF:000002">
    <property type="entry name" value="tRNA sulfurtransferase"/>
    <property type="match status" value="1"/>
</dbReference>
<dbReference type="FunFam" id="3.40.250.10:FF:000003">
    <property type="entry name" value="tRNA sulfurtransferase"/>
    <property type="match status" value="1"/>
</dbReference>
<dbReference type="FunFam" id="3.40.50.620:FF:000029">
    <property type="entry name" value="tRNA sulfurtransferase"/>
    <property type="match status" value="1"/>
</dbReference>
<dbReference type="Gene3D" id="3.30.2130.30">
    <property type="match status" value="1"/>
</dbReference>
<dbReference type="Gene3D" id="3.40.50.620">
    <property type="entry name" value="HUPs"/>
    <property type="match status" value="1"/>
</dbReference>
<dbReference type="Gene3D" id="3.40.250.10">
    <property type="entry name" value="Rhodanese-like domain"/>
    <property type="match status" value="1"/>
</dbReference>
<dbReference type="HAMAP" id="MF_00021">
    <property type="entry name" value="ThiI"/>
    <property type="match status" value="1"/>
</dbReference>
<dbReference type="InterPro" id="IPR001763">
    <property type="entry name" value="Rhodanese-like_dom"/>
</dbReference>
<dbReference type="InterPro" id="IPR036873">
    <property type="entry name" value="Rhodanese-like_dom_sf"/>
</dbReference>
<dbReference type="InterPro" id="IPR014729">
    <property type="entry name" value="Rossmann-like_a/b/a_fold"/>
</dbReference>
<dbReference type="InterPro" id="IPR020536">
    <property type="entry name" value="ThiI_AANH"/>
</dbReference>
<dbReference type="InterPro" id="IPR054173">
    <property type="entry name" value="ThiI_fer"/>
</dbReference>
<dbReference type="InterPro" id="IPR049961">
    <property type="entry name" value="ThiI_N"/>
</dbReference>
<dbReference type="InterPro" id="IPR026340">
    <property type="entry name" value="THII_Thiazole_biosynth_dom"/>
</dbReference>
<dbReference type="InterPro" id="IPR004114">
    <property type="entry name" value="THUMP_dom"/>
</dbReference>
<dbReference type="InterPro" id="IPR049962">
    <property type="entry name" value="THUMP_ThiI"/>
</dbReference>
<dbReference type="InterPro" id="IPR003720">
    <property type="entry name" value="tRNA_STrfase"/>
</dbReference>
<dbReference type="InterPro" id="IPR050102">
    <property type="entry name" value="tRNA_sulfurtransferase_ThiI"/>
</dbReference>
<dbReference type="NCBIfam" id="TIGR04271">
    <property type="entry name" value="ThiI_C_thiazole"/>
    <property type="match status" value="1"/>
</dbReference>
<dbReference type="NCBIfam" id="TIGR00342">
    <property type="entry name" value="tRNA uracil 4-sulfurtransferase ThiI"/>
    <property type="match status" value="1"/>
</dbReference>
<dbReference type="PANTHER" id="PTHR43209">
    <property type="entry name" value="TRNA SULFURTRANSFERASE"/>
    <property type="match status" value="1"/>
</dbReference>
<dbReference type="PANTHER" id="PTHR43209:SF1">
    <property type="entry name" value="TRNA SULFURTRANSFERASE"/>
    <property type="match status" value="1"/>
</dbReference>
<dbReference type="Pfam" id="PF02568">
    <property type="entry name" value="ThiI"/>
    <property type="match status" value="1"/>
</dbReference>
<dbReference type="Pfam" id="PF22025">
    <property type="entry name" value="ThiI_fer"/>
    <property type="match status" value="1"/>
</dbReference>
<dbReference type="Pfam" id="PF02926">
    <property type="entry name" value="THUMP"/>
    <property type="match status" value="1"/>
</dbReference>
<dbReference type="SMART" id="SM00981">
    <property type="entry name" value="THUMP"/>
    <property type="match status" value="1"/>
</dbReference>
<dbReference type="SUPFAM" id="SSF52402">
    <property type="entry name" value="Adenine nucleotide alpha hydrolases-like"/>
    <property type="match status" value="1"/>
</dbReference>
<dbReference type="SUPFAM" id="SSF52821">
    <property type="entry name" value="Rhodanese/Cell cycle control phosphatase"/>
    <property type="match status" value="1"/>
</dbReference>
<dbReference type="SUPFAM" id="SSF143437">
    <property type="entry name" value="THUMP domain-like"/>
    <property type="match status" value="1"/>
</dbReference>
<dbReference type="PROSITE" id="PS50206">
    <property type="entry name" value="RHODANESE_3"/>
    <property type="match status" value="1"/>
</dbReference>
<dbReference type="PROSITE" id="PS51165">
    <property type="entry name" value="THUMP"/>
    <property type="match status" value="1"/>
</dbReference>
<sequence length="482" mass="55015">MKFIIKLFPEITIKSQSVRLRFIKILTGNIRNVLKHYDETLAVVRHWDNIEVRAKDENQRLAIRDALTRIPGIHHILEVEDVPFTDMHDIFEKALVQYRDQLEGKTFCVRVKRRGKHDFSSIDVERYVGGGLNQHIESARVKLTNPEVTVHLEVEDDRLLLIKGRYEGIGGFPIGTQEDVLSLISGGFDSGVSSYMLMRRGCRVHYCFFNLGGAAHEIGVRQVAHYLWNRFGSSHRVRFVAINFEPVVGEILEKIDDGQMGVILKRMMVRAASKVAERYGVQALVTGEALGQVSSQTLTNLRLIDNVSDTLILRPLISYDKEHIINLARQIGTEDFARTMPEYCGVISKSPTVKAVKSKIEAEEEKFDFSILDKVVEEANNVDIREIAQQTEQEVVEVETVNGFGPNDVILDIRSIDEQEDKPLKVEGIDVVSLPFYKLSTKFGDLDQNRTWLLWCERGVMSRLQALYLREQGFNNVKVYRP</sequence>